<proteinExistence type="evidence at protein level"/>
<protein>
    <recommendedName>
        <fullName>Serralysin</fullName>
        <ecNumber>3.4.24.40</ecNumber>
    </recommendedName>
    <alternativeName>
        <fullName>Extracellular metalloproteinase</fullName>
    </alternativeName>
    <alternativeName>
        <fullName>Serratiopeptidase</fullName>
        <shortName>Serrapeptase</shortName>
        <shortName>Serrapeptidase</shortName>
    </alternativeName>
    <alternativeName>
        <fullName>Zinc proteinase</fullName>
    </alternativeName>
</protein>
<comment type="function">
    <text>Naturally present in the silkworm intestine and allows the emerging moth to dissolve its cocoon.</text>
</comment>
<comment type="catalytic activity">
    <reaction>
        <text>Preferential cleavage of bonds with hydrophobic residues in P1'.</text>
        <dbReference type="EC" id="3.4.24.40"/>
    </reaction>
</comment>
<comment type="cofactor">
    <cofactor>
        <name>Ca(2+)</name>
        <dbReference type="ChEBI" id="CHEBI:29108"/>
    </cofactor>
    <text>Binds 7 Ca(2+) ions per subunit.</text>
</comment>
<comment type="cofactor">
    <cofactor>
        <name>Zn(2+)</name>
        <dbReference type="ChEBI" id="CHEBI:29105"/>
    </cofactor>
    <text>Binds 1 zinc ion per subunit.</text>
</comment>
<comment type="subcellular location">
    <subcellularLocation>
        <location>Secreted</location>
    </subcellularLocation>
</comment>
<comment type="miscellaneous">
    <text>The Gly-rich repeats may be important in the extracellular secretion of this metalloprotease.</text>
</comment>
<comment type="miscellaneous">
    <text>In Japan this enzyme, isolated from a Serratia strain presents in the gut of silkworms, is used as a food supplement because it is reported to induce fibrinolytic, anti-inflammatory and anti-edemic (prevents swelling and fluid retention) activity in a number of tissues.</text>
</comment>
<comment type="similarity">
    <text evidence="2">Belongs to the peptidase M10B family.</text>
</comment>
<comment type="sequence caution" evidence="2">
    <conflict type="frameshift">
        <sequence resource="EMBL-CDS" id="CAA27738"/>
    </conflict>
</comment>
<sequence>MQSTKKAIEITESNFAAATTGYDAVDDLLHYHERGNGIQINGKDSFSNEQAGLFITRENQTWNGYKVFGQPVKLTFSFPDYKFSSTNVAGDTGLSKFSAEQQQQAKLSLQSWADVANITFTEVAAGQKANITFGNYSQDRPGHYDYGTQAYAFLPNTIWQGQDLGGQTWYNVNQSNVKHPATEDYGRQTFTHEIGHALGLSHPGDYNAGEGNPTYRDVTYAEDTRQFSLMSYWSETNTGGDNGGHYAAAPLLDDIAAIQHLYGANLSTRTGDTVYGFNSNTGRDFLSTTSNSQKVIFAAWDAGGNDTFDFSGYTANQRINLNEKSFSDVGGLKGNVSIAAGVTIENAIGGSGNDVIVGNAANNVLKGGAGNDVLFGGGGADELWGGAGKDIFVFSAASDSAPGASDWIRDFQKGIDKIDLSFFNKEAQSSDFIHFVDHFSGAAGEALLSYNASNNVTDLSVNIGGHQAPDFLVKIVGQVDVATDFIV</sequence>
<reference key="1">
    <citation type="journal article" date="1986" name="Nucleic Acids Res.">
        <title>Cloning and sequencing of Serratia protease gene.</title>
        <authorList>
            <person name="Nakahama K."/>
            <person name="Yoshimura K."/>
            <person name="Marumoto R."/>
            <person name="Kikuchi M."/>
            <person name="Lee I.S."/>
            <person name="Hase T."/>
            <person name="Matsubara H."/>
        </authorList>
    </citation>
    <scope>NUCLEOTIDE SEQUENCE [GENOMIC DNA]</scope>
</reference>
<reference key="2">
    <citation type="journal article" date="1984" name="J. Biochem.">
        <title>Serratia protease. Amino acid sequences of both termini, the 53 residues in the middle region containing the sole methionine residue, and a probable zinc-binding region.</title>
        <authorList>
            <person name="Lee I.S."/>
            <person name="Wakabayashi S."/>
            <person name="Miyata K."/>
            <person name="Tomoda K."/>
            <person name="Yoneda M."/>
            <person name="Kangawa K."/>
            <person name="Minamino N."/>
            <person name="Matsuo H."/>
            <person name="Matsubara H."/>
        </authorList>
    </citation>
    <scope>PROTEIN SEQUENCE OF 17-34 AND 179-269</scope>
</reference>
<reference key="3">
    <citation type="journal article" date="1996" name="J. Biochem.">
        <title>Crystal structure of Serratia protease, a zinc-dependent proteinase from Serratia sp. E-15, containing a beta-sheet coil motif at 2.0-A resolution.</title>
        <authorList>
            <person name="Hamada K."/>
            <person name="Hata Y."/>
            <person name="Katsuya Y."/>
            <person name="Hiramatsu H."/>
            <person name="Fujiwara T."/>
            <person name="Katsube Y."/>
        </authorList>
    </citation>
    <scope>X-RAY CRYSTALLOGRAPHY (2.0 ANGSTROMS) OF 17-487</scope>
</reference>
<keyword id="KW-0002">3D-structure</keyword>
<keyword id="KW-0106">Calcium</keyword>
<keyword id="KW-0903">Direct protein sequencing</keyword>
<keyword id="KW-0378">Hydrolase</keyword>
<keyword id="KW-0479">Metal-binding</keyword>
<keyword id="KW-0482">Metalloprotease</keyword>
<keyword id="KW-0645">Protease</keyword>
<keyword id="KW-0677">Repeat</keyword>
<keyword id="KW-0964">Secreted</keyword>
<keyword id="KW-0862">Zinc</keyword>
<keyword id="KW-0865">Zymogen</keyword>
<dbReference type="EC" id="3.4.24.40"/>
<dbReference type="EMBL" id="X04127">
    <property type="protein sequence ID" value="CAA27738.1"/>
    <property type="status" value="ALT_FRAME"/>
    <property type="molecule type" value="Genomic_DNA"/>
</dbReference>
<dbReference type="PIR" id="A23596">
    <property type="entry name" value="HYSE15"/>
</dbReference>
<dbReference type="PDB" id="1SRP">
    <property type="method" value="X-ray"/>
    <property type="resolution" value="2.00 A"/>
    <property type="chains" value="A=17-487"/>
</dbReference>
<dbReference type="PDBsum" id="1SRP"/>
<dbReference type="SMR" id="P07268"/>
<dbReference type="MEROPS" id="M10.051"/>
<dbReference type="EvolutionaryTrace" id="P07268"/>
<dbReference type="GO" id="GO:0031012">
    <property type="term" value="C:extracellular matrix"/>
    <property type="evidence" value="ECO:0007669"/>
    <property type="project" value="InterPro"/>
</dbReference>
<dbReference type="GO" id="GO:0005615">
    <property type="term" value="C:extracellular space"/>
    <property type="evidence" value="ECO:0007669"/>
    <property type="project" value="InterPro"/>
</dbReference>
<dbReference type="GO" id="GO:0005509">
    <property type="term" value="F:calcium ion binding"/>
    <property type="evidence" value="ECO:0007669"/>
    <property type="project" value="InterPro"/>
</dbReference>
<dbReference type="GO" id="GO:0004222">
    <property type="term" value="F:metalloendopeptidase activity"/>
    <property type="evidence" value="ECO:0007669"/>
    <property type="project" value="InterPro"/>
</dbReference>
<dbReference type="GO" id="GO:0008270">
    <property type="term" value="F:zinc ion binding"/>
    <property type="evidence" value="ECO:0007669"/>
    <property type="project" value="InterPro"/>
</dbReference>
<dbReference type="GO" id="GO:0006508">
    <property type="term" value="P:proteolysis"/>
    <property type="evidence" value="ECO:0000315"/>
    <property type="project" value="CACAO"/>
</dbReference>
<dbReference type="CDD" id="cd04277">
    <property type="entry name" value="ZnMc_serralysin_like"/>
    <property type="match status" value="1"/>
</dbReference>
<dbReference type="FunFam" id="2.150.10.10:FF:000001">
    <property type="entry name" value="Serralysin"/>
    <property type="match status" value="1"/>
</dbReference>
<dbReference type="FunFam" id="3.40.390.10:FF:000046">
    <property type="entry name" value="Serralysin"/>
    <property type="match status" value="1"/>
</dbReference>
<dbReference type="Gene3D" id="3.40.390.10">
    <property type="entry name" value="Collagenase (Catalytic Domain)"/>
    <property type="match status" value="1"/>
</dbReference>
<dbReference type="Gene3D" id="2.150.10.10">
    <property type="entry name" value="Serralysin-like metalloprotease, C-terminal"/>
    <property type="match status" value="1"/>
</dbReference>
<dbReference type="InterPro" id="IPR018511">
    <property type="entry name" value="Hemolysin-typ_Ca-bd_CS"/>
</dbReference>
<dbReference type="InterPro" id="IPR001343">
    <property type="entry name" value="Hemolysn_Ca-bd"/>
</dbReference>
<dbReference type="InterPro" id="IPR024079">
    <property type="entry name" value="MetalloPept_cat_dom_sf"/>
</dbReference>
<dbReference type="InterPro" id="IPR001818">
    <property type="entry name" value="Pept_M10_metallopeptidase"/>
</dbReference>
<dbReference type="InterPro" id="IPR016294">
    <property type="entry name" value="Pept_M10B"/>
</dbReference>
<dbReference type="InterPro" id="IPR013858">
    <property type="entry name" value="Peptidase_M10B_C"/>
</dbReference>
<dbReference type="InterPro" id="IPR006026">
    <property type="entry name" value="Peptidase_Metallo"/>
</dbReference>
<dbReference type="InterPro" id="IPR034033">
    <property type="entry name" value="Serralysin-like"/>
</dbReference>
<dbReference type="InterPro" id="IPR011049">
    <property type="entry name" value="Serralysin-like_metalloprot_C"/>
</dbReference>
<dbReference type="NCBIfam" id="NF035945">
    <property type="entry name" value="Zn_serralysin"/>
    <property type="match status" value="1"/>
</dbReference>
<dbReference type="PANTHER" id="PTHR10201">
    <property type="entry name" value="MATRIX METALLOPROTEINASE"/>
    <property type="match status" value="1"/>
</dbReference>
<dbReference type="PANTHER" id="PTHR10201:SF323">
    <property type="entry name" value="MATRIX METALLOPROTEINASE-21"/>
    <property type="match status" value="1"/>
</dbReference>
<dbReference type="Pfam" id="PF00353">
    <property type="entry name" value="HemolysinCabind"/>
    <property type="match status" value="1"/>
</dbReference>
<dbReference type="Pfam" id="PF00413">
    <property type="entry name" value="Peptidase_M10"/>
    <property type="match status" value="1"/>
</dbReference>
<dbReference type="Pfam" id="PF08548">
    <property type="entry name" value="Peptidase_M10_C"/>
    <property type="match status" value="1"/>
</dbReference>
<dbReference type="PIRSF" id="PIRSF001205">
    <property type="entry name" value="Peptidase_M10B"/>
    <property type="match status" value="1"/>
</dbReference>
<dbReference type="PRINTS" id="PR00313">
    <property type="entry name" value="CABNDNGRPT"/>
</dbReference>
<dbReference type="SMART" id="SM00235">
    <property type="entry name" value="ZnMc"/>
    <property type="match status" value="1"/>
</dbReference>
<dbReference type="SUPFAM" id="SSF51120">
    <property type="entry name" value="beta-Roll"/>
    <property type="match status" value="1"/>
</dbReference>
<dbReference type="SUPFAM" id="SSF55486">
    <property type="entry name" value="Metalloproteases ('zincins'), catalytic domain"/>
    <property type="match status" value="1"/>
</dbReference>
<dbReference type="PROSITE" id="PS00330">
    <property type="entry name" value="HEMOLYSIN_CALCIUM"/>
    <property type="match status" value="1"/>
</dbReference>
<dbReference type="PROSITE" id="PS00142">
    <property type="entry name" value="ZINC_PROTEASE"/>
    <property type="match status" value="1"/>
</dbReference>
<name>PRZN_SERME</name>
<feature type="propeptide" id="PRO_0000028695" evidence="1">
    <location>
        <begin position="1"/>
        <end position="16"/>
    </location>
</feature>
<feature type="chain" id="PRO_0000028696" description="Serralysin">
    <location>
        <begin position="17"/>
        <end position="487"/>
    </location>
</feature>
<feature type="repeat" description="Hemolysin-type calcium-binding 1">
    <location>
        <begin position="348"/>
        <end position="365"/>
    </location>
</feature>
<feature type="repeat" description="Hemolysin-type calcium-binding 2">
    <location>
        <begin position="366"/>
        <end position="383"/>
    </location>
</feature>
<feature type="active site">
    <location>
        <position position="193"/>
    </location>
</feature>
<feature type="binding site">
    <location>
        <position position="192"/>
    </location>
    <ligand>
        <name>Zn(2+)</name>
        <dbReference type="ChEBI" id="CHEBI:29105"/>
        <note>catalytic</note>
    </ligand>
</feature>
<feature type="binding site">
    <location>
        <position position="196"/>
    </location>
    <ligand>
        <name>Zn(2+)</name>
        <dbReference type="ChEBI" id="CHEBI:29105"/>
        <note>catalytic</note>
    </ligand>
</feature>
<feature type="binding site">
    <location>
        <position position="202"/>
    </location>
    <ligand>
        <name>Zn(2+)</name>
        <dbReference type="ChEBI" id="CHEBI:29105"/>
        <note>catalytic</note>
    </ligand>
</feature>
<feature type="binding site">
    <location>
        <position position="232"/>
    </location>
    <ligand>
        <name>Zn(2+)</name>
        <dbReference type="ChEBI" id="CHEBI:29105"/>
        <note>catalytic</note>
    </ligand>
</feature>
<feature type="binding site">
    <location>
        <position position="269"/>
    </location>
    <ligand>
        <name>Ca(2+)</name>
        <dbReference type="ChEBI" id="CHEBI:29108"/>
        <label>1</label>
    </ligand>
</feature>
<feature type="binding site">
    <location>
        <position position="271"/>
    </location>
    <ligand>
        <name>Ca(2+)</name>
        <dbReference type="ChEBI" id="CHEBI:29108"/>
        <label>1</label>
    </ligand>
</feature>
<feature type="binding site">
    <location>
        <position position="273"/>
    </location>
    <ligand>
        <name>Ca(2+)</name>
        <dbReference type="ChEBI" id="CHEBI:29108"/>
        <label>1</label>
    </ligand>
</feature>
<feature type="binding site">
    <location>
        <position position="301"/>
    </location>
    <ligand>
        <name>Ca(2+)</name>
        <dbReference type="ChEBI" id="CHEBI:29108"/>
        <label>1</label>
    </ligand>
</feature>
<feature type="binding site">
    <location>
        <position position="303"/>
    </location>
    <ligand>
        <name>Ca(2+)</name>
        <dbReference type="ChEBI" id="CHEBI:29108"/>
        <label>1</label>
    </ligand>
</feature>
<feature type="binding site">
    <location>
        <position position="304"/>
    </location>
    <ligand>
        <name>Ca(2+)</name>
        <dbReference type="ChEBI" id="CHEBI:29108"/>
        <label>2</label>
    </ligand>
</feature>
<feature type="binding site">
    <location>
        <position position="306"/>
    </location>
    <ligand>
        <name>Ca(2+)</name>
        <dbReference type="ChEBI" id="CHEBI:29108"/>
        <label>1</label>
    </ligand>
</feature>
<feature type="binding site">
    <location>
        <position position="306"/>
    </location>
    <ligand>
        <name>Ca(2+)</name>
        <dbReference type="ChEBI" id="CHEBI:29108"/>
        <label>2</label>
    </ligand>
</feature>
<feature type="binding site">
    <location>
        <position position="343"/>
    </location>
    <ligand>
        <name>Ca(2+)</name>
        <dbReference type="ChEBI" id="CHEBI:29108"/>
        <label>2</label>
    </ligand>
</feature>
<feature type="binding site">
    <location>
        <position position="345"/>
    </location>
    <ligand>
        <name>Ca(2+)</name>
        <dbReference type="ChEBI" id="CHEBI:29108"/>
        <label>2</label>
    </ligand>
</feature>
<feature type="binding site">
    <location>
        <position position="350"/>
    </location>
    <ligand>
        <name>Ca(2+)</name>
        <dbReference type="ChEBI" id="CHEBI:29108"/>
        <label>3</label>
    </ligand>
</feature>
<feature type="binding site">
    <location>
        <position position="352"/>
    </location>
    <ligand>
        <name>Ca(2+)</name>
        <dbReference type="ChEBI" id="CHEBI:29108"/>
        <label>3</label>
    </ligand>
</feature>
<feature type="binding site">
    <location>
        <position position="354"/>
    </location>
    <ligand>
        <name>Ca(2+)</name>
        <dbReference type="ChEBI" id="CHEBI:29108"/>
        <label>3</label>
    </ligand>
</feature>
<feature type="binding site">
    <location>
        <position position="359"/>
    </location>
    <ligand>
        <name>Ca(2+)</name>
        <dbReference type="ChEBI" id="CHEBI:29108"/>
        <label>4</label>
    </ligand>
</feature>
<feature type="binding site">
    <location>
        <position position="361"/>
    </location>
    <ligand>
        <name>Ca(2+)</name>
        <dbReference type="ChEBI" id="CHEBI:29108"/>
        <label>4</label>
    </ligand>
</feature>
<feature type="binding site">
    <location>
        <position position="363"/>
    </location>
    <ligand>
        <name>Ca(2+)</name>
        <dbReference type="ChEBI" id="CHEBI:29108"/>
        <label>4</label>
    </ligand>
</feature>
<feature type="binding site">
    <location>
        <position position="367"/>
    </location>
    <ligand>
        <name>Ca(2+)</name>
        <dbReference type="ChEBI" id="CHEBI:29108"/>
        <label>3</label>
    </ligand>
</feature>
<feature type="binding site">
    <location>
        <position position="368"/>
    </location>
    <ligand>
        <name>Ca(2+)</name>
        <dbReference type="ChEBI" id="CHEBI:29108"/>
        <label>5</label>
    </ligand>
</feature>
<feature type="binding site">
    <location>
        <position position="369"/>
    </location>
    <ligand>
        <name>Ca(2+)</name>
        <dbReference type="ChEBI" id="CHEBI:29108"/>
        <label>3</label>
    </ligand>
</feature>
<feature type="binding site">
    <location>
        <position position="372"/>
    </location>
    <ligand>
        <name>Ca(2+)</name>
        <dbReference type="ChEBI" id="CHEBI:29108"/>
        <label>3</label>
    </ligand>
</feature>
<feature type="binding site">
    <location>
        <position position="372"/>
    </location>
    <ligand>
        <name>Ca(2+)</name>
        <dbReference type="ChEBI" id="CHEBI:29108"/>
        <label>5</label>
    </ligand>
</feature>
<feature type="binding site">
    <location>
        <position position="376"/>
    </location>
    <ligand>
        <name>Ca(2+)</name>
        <dbReference type="ChEBI" id="CHEBI:29108"/>
        <label>4</label>
    </ligand>
</feature>
<feature type="binding site">
    <location>
        <position position="377"/>
    </location>
    <ligand>
        <name>Ca(2+)</name>
        <dbReference type="ChEBI" id="CHEBI:29108"/>
        <label>6</label>
    </ligand>
</feature>
<feature type="binding site">
    <location>
        <position position="378"/>
    </location>
    <ligand>
        <name>Ca(2+)</name>
        <dbReference type="ChEBI" id="CHEBI:29108"/>
        <label>4</label>
    </ligand>
</feature>
<feature type="binding site">
    <location>
        <position position="379"/>
    </location>
    <ligand>
        <name>Ca(2+)</name>
        <dbReference type="ChEBI" id="CHEBI:29108"/>
        <label>6</label>
    </ligand>
</feature>
<feature type="binding site">
    <location>
        <position position="381"/>
    </location>
    <ligand>
        <name>Ca(2+)</name>
        <dbReference type="ChEBI" id="CHEBI:29108"/>
        <label>4</label>
    </ligand>
</feature>
<feature type="binding site">
    <location>
        <position position="381"/>
    </location>
    <ligand>
        <name>Ca(2+)</name>
        <dbReference type="ChEBI" id="CHEBI:29108"/>
        <label>6</label>
    </ligand>
</feature>
<feature type="binding site">
    <location>
        <position position="385"/>
    </location>
    <ligand>
        <name>Ca(2+)</name>
        <dbReference type="ChEBI" id="CHEBI:29108"/>
        <label>5</label>
    </ligand>
</feature>
<feature type="binding site">
    <location>
        <position position="386"/>
    </location>
    <ligand>
        <name>Ca(2+)</name>
        <dbReference type="ChEBI" id="CHEBI:29108"/>
        <label>7</label>
    </ligand>
</feature>
<feature type="binding site">
    <location>
        <position position="387"/>
    </location>
    <ligand>
        <name>Ca(2+)</name>
        <dbReference type="ChEBI" id="CHEBI:29108"/>
        <label>5</label>
    </ligand>
</feature>
<feature type="binding site">
    <location>
        <position position="388"/>
    </location>
    <ligand>
        <name>Ca(2+)</name>
        <dbReference type="ChEBI" id="CHEBI:29108"/>
        <label>7</label>
    </ligand>
</feature>
<feature type="binding site">
    <location>
        <position position="390"/>
    </location>
    <ligand>
        <name>Ca(2+)</name>
        <dbReference type="ChEBI" id="CHEBI:29108"/>
        <label>5</label>
    </ligand>
</feature>
<feature type="binding site">
    <location>
        <position position="390"/>
    </location>
    <ligand>
        <name>Ca(2+)</name>
        <dbReference type="ChEBI" id="CHEBI:29108"/>
        <label>7</label>
    </ligand>
</feature>
<feature type="binding site">
    <location>
        <position position="399"/>
    </location>
    <ligand>
        <name>Ca(2+)</name>
        <dbReference type="ChEBI" id="CHEBI:29108"/>
        <label>6</label>
    </ligand>
</feature>
<feature type="binding site">
    <location>
        <position position="406"/>
    </location>
    <ligand>
        <name>Ca(2+)</name>
        <dbReference type="ChEBI" id="CHEBI:29108"/>
        <label>6</label>
    </ligand>
</feature>
<feature type="binding site">
    <location>
        <position position="416"/>
    </location>
    <ligand>
        <name>Ca(2+)</name>
        <dbReference type="ChEBI" id="CHEBI:29108"/>
        <label>7</label>
    </ligand>
</feature>
<feature type="helix" evidence="3">
    <location>
        <begin position="21"/>
        <end position="29"/>
    </location>
</feature>
<feature type="turn" evidence="3">
    <location>
        <begin position="30"/>
        <end position="32"/>
    </location>
</feature>
<feature type="strand" evidence="3">
    <location>
        <begin position="39"/>
        <end position="44"/>
    </location>
</feature>
<feature type="helix" evidence="3">
    <location>
        <begin position="48"/>
        <end position="55"/>
    </location>
</feature>
<feature type="turn" evidence="3">
    <location>
        <begin position="56"/>
        <end position="58"/>
    </location>
</feature>
<feature type="strand" evidence="3">
    <location>
        <begin position="72"/>
        <end position="77"/>
    </location>
</feature>
<feature type="helix" evidence="3">
    <location>
        <begin position="99"/>
        <end position="115"/>
    </location>
</feature>
<feature type="strand" evidence="3">
    <location>
        <begin position="116"/>
        <end position="122"/>
    </location>
</feature>
<feature type="strand" evidence="3">
    <location>
        <begin position="125"/>
        <end position="127"/>
    </location>
</feature>
<feature type="strand" evidence="3">
    <location>
        <begin position="130"/>
        <end position="136"/>
    </location>
</feature>
<feature type="strand" evidence="3">
    <location>
        <begin position="138"/>
        <end position="140"/>
    </location>
</feature>
<feature type="strand" evidence="3">
    <location>
        <begin position="150"/>
        <end position="152"/>
    </location>
</feature>
<feature type="strand" evidence="3">
    <location>
        <begin position="167"/>
        <end position="171"/>
    </location>
</feature>
<feature type="helix" evidence="3">
    <location>
        <begin position="175"/>
        <end position="178"/>
    </location>
</feature>
<feature type="turn" evidence="3">
    <location>
        <begin position="180"/>
        <end position="182"/>
    </location>
</feature>
<feature type="helix" evidence="3">
    <location>
        <begin position="184"/>
        <end position="197"/>
    </location>
</feature>
<feature type="strand" evidence="3">
    <location>
        <begin position="208"/>
        <end position="211"/>
    </location>
</feature>
<feature type="helix" evidence="3">
    <location>
        <begin position="215"/>
        <end position="217"/>
    </location>
</feature>
<feature type="turn" evidence="3">
    <location>
        <begin position="225"/>
        <end position="227"/>
    </location>
</feature>
<feature type="helix" evidence="3">
    <location>
        <begin position="235"/>
        <end position="238"/>
    </location>
</feature>
<feature type="helix" evidence="3">
    <location>
        <begin position="252"/>
        <end position="262"/>
    </location>
</feature>
<feature type="turn" evidence="3">
    <location>
        <begin position="266"/>
        <end position="269"/>
    </location>
</feature>
<feature type="strand" evidence="3">
    <location>
        <begin position="274"/>
        <end position="276"/>
    </location>
</feature>
<feature type="helix" evidence="3">
    <location>
        <begin position="284"/>
        <end position="286"/>
    </location>
</feature>
<feature type="strand" evidence="3">
    <location>
        <begin position="297"/>
        <end position="299"/>
    </location>
</feature>
<feature type="strand" evidence="3">
    <location>
        <begin position="307"/>
        <end position="309"/>
    </location>
</feature>
<feature type="strand" evidence="3">
    <location>
        <begin position="318"/>
        <end position="320"/>
    </location>
</feature>
<feature type="strand" evidence="3">
    <location>
        <begin position="326"/>
        <end position="328"/>
    </location>
</feature>
<feature type="strand" evidence="3">
    <location>
        <begin position="336"/>
        <end position="338"/>
    </location>
</feature>
<feature type="strand" evidence="3">
    <location>
        <begin position="346"/>
        <end position="348"/>
    </location>
</feature>
<feature type="strand" evidence="3">
    <location>
        <begin position="355"/>
        <end position="357"/>
    </location>
</feature>
<feature type="strand" evidence="3">
    <location>
        <begin position="364"/>
        <end position="366"/>
    </location>
</feature>
<feature type="strand" evidence="3">
    <location>
        <begin position="373"/>
        <end position="375"/>
    </location>
</feature>
<feature type="strand" evidence="3">
    <location>
        <begin position="382"/>
        <end position="384"/>
    </location>
</feature>
<feature type="strand" evidence="3">
    <location>
        <begin position="391"/>
        <end position="393"/>
    </location>
</feature>
<feature type="helix" evidence="3">
    <location>
        <begin position="397"/>
        <end position="400"/>
    </location>
</feature>
<feature type="strand" evidence="3">
    <location>
        <begin position="406"/>
        <end position="410"/>
    </location>
</feature>
<feature type="turn" evidence="3">
    <location>
        <begin position="413"/>
        <end position="415"/>
    </location>
</feature>
<feature type="strand" evidence="3">
    <location>
        <begin position="416"/>
        <end position="419"/>
    </location>
</feature>
<feature type="helix" evidence="3">
    <location>
        <begin position="421"/>
        <end position="427"/>
    </location>
</feature>
<feature type="strand" evidence="3">
    <location>
        <begin position="432"/>
        <end position="435"/>
    </location>
</feature>
<feature type="strand" evidence="3">
    <location>
        <begin position="445"/>
        <end position="451"/>
    </location>
</feature>
<feature type="turn" evidence="3">
    <location>
        <begin position="452"/>
        <end position="455"/>
    </location>
</feature>
<feature type="strand" evidence="3">
    <location>
        <begin position="456"/>
        <end position="461"/>
    </location>
</feature>
<feature type="strand" evidence="3">
    <location>
        <begin position="470"/>
        <end position="477"/>
    </location>
</feature>
<feature type="turn" evidence="3">
    <location>
        <begin position="481"/>
        <end position="483"/>
    </location>
</feature>
<feature type="strand" evidence="3">
    <location>
        <begin position="484"/>
        <end position="486"/>
    </location>
</feature>
<accession>P07268</accession>
<organism>
    <name type="scientific">Serratia marcescens (strain ATCC 21074 / E-15)</name>
    <dbReference type="NCBI Taxonomy" id="617"/>
    <lineage>
        <taxon>Bacteria</taxon>
        <taxon>Pseudomonadati</taxon>
        <taxon>Pseudomonadota</taxon>
        <taxon>Gammaproteobacteria</taxon>
        <taxon>Enterobacterales</taxon>
        <taxon>Yersiniaceae</taxon>
        <taxon>Serratia</taxon>
    </lineage>
</organism>
<evidence type="ECO:0000269" key="1">
    <source>
    </source>
</evidence>
<evidence type="ECO:0000305" key="2"/>
<evidence type="ECO:0007829" key="3">
    <source>
        <dbReference type="PDB" id="1SRP"/>
    </source>
</evidence>